<reference key="1">
    <citation type="submission" date="2009-02" db="EMBL/GenBank/DDBJ databases">
        <title>Vibrio splendidus str. LGP32 complete genome.</title>
        <authorList>
            <person name="Mazel D."/>
            <person name="Le Roux F."/>
        </authorList>
    </citation>
    <scope>NUCLEOTIDE SEQUENCE [LARGE SCALE GENOMIC DNA]</scope>
    <source>
        <strain>LGP32</strain>
    </source>
</reference>
<evidence type="ECO:0000255" key="1">
    <source>
        <dbReference type="HAMAP-Rule" id="MF_00812"/>
    </source>
</evidence>
<gene>
    <name evidence="1" type="primary">tpm</name>
    <name type="ordered locus">VS_1718</name>
</gene>
<keyword id="KW-0963">Cytoplasm</keyword>
<keyword id="KW-0489">Methyltransferase</keyword>
<keyword id="KW-0949">S-adenosyl-L-methionine</keyword>
<keyword id="KW-0808">Transferase</keyword>
<feature type="chain" id="PRO_1000148592" description="Thiopurine S-methyltransferase">
    <location>
        <begin position="1"/>
        <end position="217"/>
    </location>
</feature>
<feature type="binding site" evidence="1">
    <location>
        <position position="11"/>
    </location>
    <ligand>
        <name>S-adenosyl-L-methionine</name>
        <dbReference type="ChEBI" id="CHEBI:59789"/>
    </ligand>
</feature>
<feature type="binding site" evidence="1">
    <location>
        <position position="46"/>
    </location>
    <ligand>
        <name>S-adenosyl-L-methionine</name>
        <dbReference type="ChEBI" id="CHEBI:59789"/>
    </ligand>
</feature>
<feature type="binding site" evidence="1">
    <location>
        <position position="67"/>
    </location>
    <ligand>
        <name>S-adenosyl-L-methionine</name>
        <dbReference type="ChEBI" id="CHEBI:59789"/>
    </ligand>
</feature>
<feature type="binding site" evidence="1">
    <location>
        <position position="122"/>
    </location>
    <ligand>
        <name>S-adenosyl-L-methionine</name>
        <dbReference type="ChEBI" id="CHEBI:59789"/>
    </ligand>
</feature>
<name>TPMT_VIBA3</name>
<sequence length="217" mass="24874">MNNPEFWHNKWAANQIGFHLEDVNPLLIKFWEKTEPNYEKSVFVPLCGKSEDLIWLATKHEEVQGVELSQIAVRAFFAEHLYTPTVTQISGQHELYQFDELNIYTGDYFTAPIQPVDTIYDRASLVALPAEIRAQYVERLKQLLKPGGKILLVTLDYDQSEMAGPPFSVPKLEIDQLFAGYKITLLNQDIADDEHPKIAKKGLSRFSEEVYLIESEA</sequence>
<protein>
    <recommendedName>
        <fullName evidence="1">Thiopurine S-methyltransferase</fullName>
        <ecNumber evidence="1">2.1.1.67</ecNumber>
    </recommendedName>
    <alternativeName>
        <fullName evidence="1">Thiopurine methyltransferase</fullName>
    </alternativeName>
</protein>
<accession>B7VPF3</accession>
<dbReference type="EC" id="2.1.1.67" evidence="1"/>
<dbReference type="EMBL" id="FM954972">
    <property type="protein sequence ID" value="CAV18902.1"/>
    <property type="molecule type" value="Genomic_DNA"/>
</dbReference>
<dbReference type="SMR" id="B7VPF3"/>
<dbReference type="STRING" id="575788.VS_1718"/>
<dbReference type="KEGG" id="vsp:VS_1718"/>
<dbReference type="PATRIC" id="fig|575788.5.peg.3012"/>
<dbReference type="eggNOG" id="COG0500">
    <property type="taxonomic scope" value="Bacteria"/>
</dbReference>
<dbReference type="HOGENOM" id="CLU_085515_1_0_6"/>
<dbReference type="Proteomes" id="UP000009100">
    <property type="component" value="Chromosome 1"/>
</dbReference>
<dbReference type="GO" id="GO:0005737">
    <property type="term" value="C:cytoplasm"/>
    <property type="evidence" value="ECO:0007669"/>
    <property type="project" value="UniProtKB-SubCell"/>
</dbReference>
<dbReference type="GO" id="GO:0008119">
    <property type="term" value="F:thiopurine S-methyltransferase activity"/>
    <property type="evidence" value="ECO:0007669"/>
    <property type="project" value="UniProtKB-UniRule"/>
</dbReference>
<dbReference type="GO" id="GO:0032259">
    <property type="term" value="P:methylation"/>
    <property type="evidence" value="ECO:0007669"/>
    <property type="project" value="UniProtKB-KW"/>
</dbReference>
<dbReference type="GO" id="GO:0010038">
    <property type="term" value="P:response to metal ion"/>
    <property type="evidence" value="ECO:0007669"/>
    <property type="project" value="InterPro"/>
</dbReference>
<dbReference type="CDD" id="cd02440">
    <property type="entry name" value="AdoMet_MTases"/>
    <property type="match status" value="1"/>
</dbReference>
<dbReference type="FunFam" id="3.40.50.150:FF:000101">
    <property type="entry name" value="Thiopurine S-methyltransferase"/>
    <property type="match status" value="1"/>
</dbReference>
<dbReference type="Gene3D" id="3.40.50.150">
    <property type="entry name" value="Vaccinia Virus protein VP39"/>
    <property type="match status" value="1"/>
</dbReference>
<dbReference type="HAMAP" id="MF_00812">
    <property type="entry name" value="Thiopur_methtran"/>
    <property type="match status" value="1"/>
</dbReference>
<dbReference type="InterPro" id="IPR029063">
    <property type="entry name" value="SAM-dependent_MTases_sf"/>
</dbReference>
<dbReference type="InterPro" id="IPR022474">
    <property type="entry name" value="Thiopur_S-MeTfrase_Se/Te_detox"/>
</dbReference>
<dbReference type="InterPro" id="IPR025835">
    <property type="entry name" value="Thiopurine_S-MeTrfase"/>
</dbReference>
<dbReference type="InterPro" id="IPR008854">
    <property type="entry name" value="TPMT"/>
</dbReference>
<dbReference type="NCBIfam" id="NF009732">
    <property type="entry name" value="PRK13255.1"/>
    <property type="match status" value="1"/>
</dbReference>
<dbReference type="NCBIfam" id="TIGR03840">
    <property type="entry name" value="TMPT_Se_Te"/>
    <property type="match status" value="1"/>
</dbReference>
<dbReference type="PANTHER" id="PTHR10259">
    <property type="entry name" value="THIOPURINE S-METHYLTRANSFERASE"/>
    <property type="match status" value="1"/>
</dbReference>
<dbReference type="PANTHER" id="PTHR10259:SF11">
    <property type="entry name" value="THIOPURINE S-METHYLTRANSFERASE"/>
    <property type="match status" value="1"/>
</dbReference>
<dbReference type="Pfam" id="PF05724">
    <property type="entry name" value="TPMT"/>
    <property type="match status" value="1"/>
</dbReference>
<dbReference type="PIRSF" id="PIRSF023956">
    <property type="entry name" value="Thiopurine_S-methyltransferase"/>
    <property type="match status" value="1"/>
</dbReference>
<dbReference type="SUPFAM" id="SSF53335">
    <property type="entry name" value="S-adenosyl-L-methionine-dependent methyltransferases"/>
    <property type="match status" value="1"/>
</dbReference>
<dbReference type="PROSITE" id="PS51585">
    <property type="entry name" value="SAM_MT_TPMT"/>
    <property type="match status" value="1"/>
</dbReference>
<comment type="catalytic activity">
    <reaction evidence="1">
        <text>S-adenosyl-L-methionine + a thiopurine = S-adenosyl-L-homocysteine + a thiopurine S-methylether.</text>
        <dbReference type="EC" id="2.1.1.67"/>
    </reaction>
</comment>
<comment type="subcellular location">
    <subcellularLocation>
        <location evidence="1">Cytoplasm</location>
    </subcellularLocation>
</comment>
<comment type="similarity">
    <text evidence="1">Belongs to the class I-like SAM-binding methyltransferase superfamily. TPMT family.</text>
</comment>
<organism>
    <name type="scientific">Vibrio atlanticus (strain LGP32)</name>
    <name type="common">Vibrio splendidus (strain Mel32)</name>
    <dbReference type="NCBI Taxonomy" id="575788"/>
    <lineage>
        <taxon>Bacteria</taxon>
        <taxon>Pseudomonadati</taxon>
        <taxon>Pseudomonadota</taxon>
        <taxon>Gammaproteobacteria</taxon>
        <taxon>Vibrionales</taxon>
        <taxon>Vibrionaceae</taxon>
        <taxon>Vibrio</taxon>
    </lineage>
</organism>
<proteinExistence type="inferred from homology"/>